<reference key="1">
    <citation type="submission" date="2006-09" db="EMBL/GenBank/DDBJ databases">
        <authorList>
            <consortium name="The Klebsiella pneumonia Genome Sequencing Project"/>
            <person name="McClelland M."/>
            <person name="Sanderson E.K."/>
            <person name="Spieth J."/>
            <person name="Clifton W.S."/>
            <person name="Latreille P."/>
            <person name="Sabo A."/>
            <person name="Pepin K."/>
            <person name="Bhonagiri V."/>
            <person name="Porwollik S."/>
            <person name="Ali J."/>
            <person name="Wilson R.K."/>
        </authorList>
    </citation>
    <scope>NUCLEOTIDE SEQUENCE [LARGE SCALE GENOMIC DNA]</scope>
    <source>
        <strain>ATCC 700721 / MGH 78578</strain>
    </source>
</reference>
<comment type="function">
    <text evidence="1">Can catalyze the hydrolysis of ATP in the presence of single-stranded DNA, the ATP-dependent uptake of single-stranded DNA by duplex DNA, and the ATP-dependent hybridization of homologous single-stranded DNAs. It interacts with LexA causing its activation and leading to its autocatalytic cleavage.</text>
</comment>
<comment type="subcellular location">
    <subcellularLocation>
        <location evidence="1">Cytoplasm</location>
    </subcellularLocation>
</comment>
<comment type="similarity">
    <text evidence="1">Belongs to the RecA family.</text>
</comment>
<keyword id="KW-0067">ATP-binding</keyword>
<keyword id="KW-0963">Cytoplasm</keyword>
<keyword id="KW-0227">DNA damage</keyword>
<keyword id="KW-0233">DNA recombination</keyword>
<keyword id="KW-0234">DNA repair</keyword>
<keyword id="KW-0238">DNA-binding</keyword>
<keyword id="KW-0547">Nucleotide-binding</keyword>
<keyword id="KW-0742">SOS response</keyword>
<sequence length="352" mass="37923">MAIDENKQKALAAALGQIEKQFGKGSIMRLGEDRTMDVETISTGSLSLDIALGAGGLPMGRIVEIYGPESSGKTTLTLQVIAAAQREGKTCAFIDAEHALDPVYARKLGVDIDNLLCSQPDTGEQALEICDALARSGAVDVIVVDSVAALTPKAEIEGEIGDSHMGLAARMMSQAMRKLAGNLKQSNTLLIFINQIRMKIGVMFGNPETTTGGNALKFYASVRLDIRRIGAVKEGDNVVGSETRVKVVKNKIAAPFKQAEFQILYGEGINFYGELVDLGVKEKLIEKAGAWYSYNGDKIGQGKANAITWLKENPAAAKEIEKKVRELLLNNQDAKPDFVVDGNDAEETEQDF</sequence>
<proteinExistence type="inferred from homology"/>
<name>RECA_KLEP7</name>
<organism>
    <name type="scientific">Klebsiella pneumoniae subsp. pneumoniae (strain ATCC 700721 / MGH 78578)</name>
    <dbReference type="NCBI Taxonomy" id="272620"/>
    <lineage>
        <taxon>Bacteria</taxon>
        <taxon>Pseudomonadati</taxon>
        <taxon>Pseudomonadota</taxon>
        <taxon>Gammaproteobacteria</taxon>
        <taxon>Enterobacterales</taxon>
        <taxon>Enterobacteriaceae</taxon>
        <taxon>Klebsiella/Raoultella group</taxon>
        <taxon>Klebsiella</taxon>
        <taxon>Klebsiella pneumoniae complex</taxon>
    </lineage>
</organism>
<evidence type="ECO:0000255" key="1">
    <source>
        <dbReference type="HAMAP-Rule" id="MF_00268"/>
    </source>
</evidence>
<feature type="chain" id="PRO_1000047935" description="Protein RecA">
    <location>
        <begin position="1"/>
        <end position="352"/>
    </location>
</feature>
<feature type="binding site" evidence="1">
    <location>
        <begin position="67"/>
        <end position="74"/>
    </location>
    <ligand>
        <name>ATP</name>
        <dbReference type="ChEBI" id="CHEBI:30616"/>
    </ligand>
</feature>
<gene>
    <name evidence="1" type="primary">recA</name>
    <name type="ordered locus">KPN78578_29710</name>
    <name type="ORF">KPN_03031</name>
</gene>
<accession>A6TCW1</accession>
<protein>
    <recommendedName>
        <fullName evidence="1">Protein RecA</fullName>
    </recommendedName>
    <alternativeName>
        <fullName evidence="1">Recombinase A</fullName>
    </alternativeName>
</protein>
<dbReference type="EMBL" id="CP000647">
    <property type="protein sequence ID" value="ABR78432.1"/>
    <property type="molecule type" value="Genomic_DNA"/>
</dbReference>
<dbReference type="RefSeq" id="WP_002914769.1">
    <property type="nucleotide sequence ID" value="NC_009648.1"/>
</dbReference>
<dbReference type="SMR" id="A6TCW1"/>
<dbReference type="STRING" id="272620.KPN_03031"/>
<dbReference type="jPOST" id="A6TCW1"/>
<dbReference type="PaxDb" id="272620-KPN_03031"/>
<dbReference type="EnsemblBacteria" id="ABR78432">
    <property type="protein sequence ID" value="ABR78432"/>
    <property type="gene ID" value="KPN_03031"/>
</dbReference>
<dbReference type="KEGG" id="kpn:KPN_03031"/>
<dbReference type="HOGENOM" id="CLU_040469_3_2_6"/>
<dbReference type="Proteomes" id="UP000000265">
    <property type="component" value="Chromosome"/>
</dbReference>
<dbReference type="GO" id="GO:0005829">
    <property type="term" value="C:cytosol"/>
    <property type="evidence" value="ECO:0007669"/>
    <property type="project" value="TreeGrafter"/>
</dbReference>
<dbReference type="GO" id="GO:0005524">
    <property type="term" value="F:ATP binding"/>
    <property type="evidence" value="ECO:0007669"/>
    <property type="project" value="UniProtKB-UniRule"/>
</dbReference>
<dbReference type="GO" id="GO:0016887">
    <property type="term" value="F:ATP hydrolysis activity"/>
    <property type="evidence" value="ECO:0007669"/>
    <property type="project" value="InterPro"/>
</dbReference>
<dbReference type="GO" id="GO:0140664">
    <property type="term" value="F:ATP-dependent DNA damage sensor activity"/>
    <property type="evidence" value="ECO:0007669"/>
    <property type="project" value="InterPro"/>
</dbReference>
<dbReference type="GO" id="GO:0003684">
    <property type="term" value="F:damaged DNA binding"/>
    <property type="evidence" value="ECO:0007669"/>
    <property type="project" value="UniProtKB-UniRule"/>
</dbReference>
<dbReference type="GO" id="GO:0003697">
    <property type="term" value="F:single-stranded DNA binding"/>
    <property type="evidence" value="ECO:0007669"/>
    <property type="project" value="UniProtKB-UniRule"/>
</dbReference>
<dbReference type="GO" id="GO:0006310">
    <property type="term" value="P:DNA recombination"/>
    <property type="evidence" value="ECO:0007669"/>
    <property type="project" value="UniProtKB-UniRule"/>
</dbReference>
<dbReference type="GO" id="GO:0006281">
    <property type="term" value="P:DNA repair"/>
    <property type="evidence" value="ECO:0007669"/>
    <property type="project" value="UniProtKB-UniRule"/>
</dbReference>
<dbReference type="GO" id="GO:0009432">
    <property type="term" value="P:SOS response"/>
    <property type="evidence" value="ECO:0007669"/>
    <property type="project" value="UniProtKB-UniRule"/>
</dbReference>
<dbReference type="CDD" id="cd00983">
    <property type="entry name" value="RecA"/>
    <property type="match status" value="1"/>
</dbReference>
<dbReference type="FunFam" id="3.40.50.300:FF:000087">
    <property type="entry name" value="Recombinase RecA"/>
    <property type="match status" value="1"/>
</dbReference>
<dbReference type="Gene3D" id="3.40.50.300">
    <property type="entry name" value="P-loop containing nucleotide triphosphate hydrolases"/>
    <property type="match status" value="1"/>
</dbReference>
<dbReference type="HAMAP" id="MF_00268">
    <property type="entry name" value="RecA"/>
    <property type="match status" value="1"/>
</dbReference>
<dbReference type="InterPro" id="IPR003593">
    <property type="entry name" value="AAA+_ATPase"/>
</dbReference>
<dbReference type="InterPro" id="IPR013765">
    <property type="entry name" value="DNA_recomb/repair_RecA"/>
</dbReference>
<dbReference type="InterPro" id="IPR020584">
    <property type="entry name" value="DNA_recomb/repair_RecA_CS"/>
</dbReference>
<dbReference type="InterPro" id="IPR027417">
    <property type="entry name" value="P-loop_NTPase"/>
</dbReference>
<dbReference type="InterPro" id="IPR049261">
    <property type="entry name" value="RecA-like_C"/>
</dbReference>
<dbReference type="InterPro" id="IPR049428">
    <property type="entry name" value="RecA-like_N"/>
</dbReference>
<dbReference type="InterPro" id="IPR020588">
    <property type="entry name" value="RecA_ATP-bd"/>
</dbReference>
<dbReference type="InterPro" id="IPR023400">
    <property type="entry name" value="RecA_C_sf"/>
</dbReference>
<dbReference type="InterPro" id="IPR020587">
    <property type="entry name" value="RecA_monomer-monomer_interface"/>
</dbReference>
<dbReference type="NCBIfam" id="TIGR02012">
    <property type="entry name" value="tigrfam_recA"/>
    <property type="match status" value="1"/>
</dbReference>
<dbReference type="PANTHER" id="PTHR45900:SF1">
    <property type="entry name" value="MITOCHONDRIAL DNA REPAIR PROTEIN RECA HOMOLOG-RELATED"/>
    <property type="match status" value="1"/>
</dbReference>
<dbReference type="PANTHER" id="PTHR45900">
    <property type="entry name" value="RECA"/>
    <property type="match status" value="1"/>
</dbReference>
<dbReference type="Pfam" id="PF00154">
    <property type="entry name" value="RecA"/>
    <property type="match status" value="1"/>
</dbReference>
<dbReference type="Pfam" id="PF21096">
    <property type="entry name" value="RecA_C"/>
    <property type="match status" value="1"/>
</dbReference>
<dbReference type="PRINTS" id="PR00142">
    <property type="entry name" value="RECA"/>
</dbReference>
<dbReference type="SMART" id="SM00382">
    <property type="entry name" value="AAA"/>
    <property type="match status" value="1"/>
</dbReference>
<dbReference type="SUPFAM" id="SSF52540">
    <property type="entry name" value="P-loop containing nucleoside triphosphate hydrolases"/>
    <property type="match status" value="1"/>
</dbReference>
<dbReference type="SUPFAM" id="SSF54752">
    <property type="entry name" value="RecA protein, C-terminal domain"/>
    <property type="match status" value="1"/>
</dbReference>
<dbReference type="PROSITE" id="PS00321">
    <property type="entry name" value="RECA_1"/>
    <property type="match status" value="1"/>
</dbReference>
<dbReference type="PROSITE" id="PS50162">
    <property type="entry name" value="RECA_2"/>
    <property type="match status" value="1"/>
</dbReference>
<dbReference type="PROSITE" id="PS50163">
    <property type="entry name" value="RECA_3"/>
    <property type="match status" value="1"/>
</dbReference>